<dbReference type="EC" id="3.1.2.2" evidence="3"/>
<dbReference type="EMBL" id="BC126654">
    <property type="protein sequence ID" value="AAI26655.1"/>
    <property type="molecule type" value="mRNA"/>
</dbReference>
<dbReference type="RefSeq" id="NP_001073837.1">
    <property type="nucleotide sequence ID" value="NM_001080368.2"/>
</dbReference>
<dbReference type="SMR" id="A1A4L1"/>
<dbReference type="FunCoup" id="A1A4L1">
    <property type="interactions" value="259"/>
</dbReference>
<dbReference type="STRING" id="9913.ENSBTAP00000043816"/>
<dbReference type="PaxDb" id="9913-ENSBTAP00000043816"/>
<dbReference type="GeneID" id="787270"/>
<dbReference type="KEGG" id="bta:787270"/>
<dbReference type="CTD" id="117145"/>
<dbReference type="eggNOG" id="KOG4781">
    <property type="taxonomic scope" value="Eukaryota"/>
</dbReference>
<dbReference type="InParanoid" id="A1A4L1"/>
<dbReference type="OrthoDB" id="506431at2759"/>
<dbReference type="Proteomes" id="UP000009136">
    <property type="component" value="Unplaced"/>
</dbReference>
<dbReference type="GO" id="GO:0005829">
    <property type="term" value="C:cytosol"/>
    <property type="evidence" value="ECO:0000250"/>
    <property type="project" value="UniProtKB"/>
</dbReference>
<dbReference type="GO" id="GO:0005743">
    <property type="term" value="C:mitochondrial inner membrane"/>
    <property type="evidence" value="ECO:0007669"/>
    <property type="project" value="UniProtKB-SubCell"/>
</dbReference>
<dbReference type="GO" id="GO:0005758">
    <property type="term" value="C:mitochondrial intermembrane space"/>
    <property type="evidence" value="ECO:0007669"/>
    <property type="project" value="UniProtKB-SubCell"/>
</dbReference>
<dbReference type="GO" id="GO:0005739">
    <property type="term" value="C:mitochondrion"/>
    <property type="evidence" value="ECO:0000250"/>
    <property type="project" value="UniProtKB"/>
</dbReference>
<dbReference type="GO" id="GO:0032587">
    <property type="term" value="C:ruffle membrane"/>
    <property type="evidence" value="ECO:0007669"/>
    <property type="project" value="UniProtKB-SubCell"/>
</dbReference>
<dbReference type="GO" id="GO:0052816">
    <property type="term" value="F:long-chain fatty acyl-CoA hydrolase activity"/>
    <property type="evidence" value="ECO:0000250"/>
    <property type="project" value="UniProtKB"/>
</dbReference>
<dbReference type="GO" id="GO:0006631">
    <property type="term" value="P:fatty acid metabolic process"/>
    <property type="evidence" value="ECO:0000250"/>
    <property type="project" value="UniProtKB"/>
</dbReference>
<dbReference type="GO" id="GO:0051898">
    <property type="term" value="P:negative regulation of phosphatidylinositol 3-kinase/protein kinase B signal transduction"/>
    <property type="evidence" value="ECO:0000250"/>
    <property type="project" value="UniProtKB"/>
</dbReference>
<dbReference type="GO" id="GO:1902108">
    <property type="term" value="P:regulation of mitochondrial membrane permeability involved in apoptotic process"/>
    <property type="evidence" value="ECO:0000250"/>
    <property type="project" value="UniProtKB"/>
</dbReference>
<dbReference type="CDD" id="cd03443">
    <property type="entry name" value="PaaI_thioesterase"/>
    <property type="match status" value="1"/>
</dbReference>
<dbReference type="FunFam" id="3.10.129.10:FF:000046">
    <property type="entry name" value="Acyl-coenzyme A thioesterase THEM4"/>
    <property type="match status" value="1"/>
</dbReference>
<dbReference type="Gene3D" id="3.10.129.10">
    <property type="entry name" value="Hotdog Thioesterase"/>
    <property type="match status" value="1"/>
</dbReference>
<dbReference type="InterPro" id="IPR029069">
    <property type="entry name" value="HotDog_dom_sf"/>
</dbReference>
<dbReference type="InterPro" id="IPR052365">
    <property type="entry name" value="THEM4/THEM5_acyl-CoA_thioest"/>
</dbReference>
<dbReference type="InterPro" id="IPR006683">
    <property type="entry name" value="Thioestr_dom"/>
</dbReference>
<dbReference type="PANTHER" id="PTHR12418">
    <property type="entry name" value="ACYL-COENZYME A THIOESTERASE THEM4"/>
    <property type="match status" value="1"/>
</dbReference>
<dbReference type="PANTHER" id="PTHR12418:SF19">
    <property type="entry name" value="ACYL-COENZYME A THIOESTERASE THEM4"/>
    <property type="match status" value="1"/>
</dbReference>
<dbReference type="Pfam" id="PF03061">
    <property type="entry name" value="4HBT"/>
    <property type="match status" value="1"/>
</dbReference>
<dbReference type="SUPFAM" id="SSF54637">
    <property type="entry name" value="Thioesterase/thiol ester dehydrase-isomerase"/>
    <property type="match status" value="1"/>
</dbReference>
<name>THEM4_BOVIN</name>
<keyword id="KW-0053">Apoptosis</keyword>
<keyword id="KW-1003">Cell membrane</keyword>
<keyword id="KW-0966">Cell projection</keyword>
<keyword id="KW-0963">Cytoplasm</keyword>
<keyword id="KW-0276">Fatty acid metabolism</keyword>
<keyword id="KW-0378">Hydrolase</keyword>
<keyword id="KW-0443">Lipid metabolism</keyword>
<keyword id="KW-0472">Membrane</keyword>
<keyword id="KW-0496">Mitochondrion</keyword>
<keyword id="KW-0999">Mitochondrion inner membrane</keyword>
<keyword id="KW-0597">Phosphoprotein</keyword>
<keyword id="KW-1185">Reference proteome</keyword>
<keyword id="KW-0809">Transit peptide</keyword>
<evidence type="ECO:0000250" key="1"/>
<evidence type="ECO:0000250" key="2">
    <source>
        <dbReference type="UniProtKB" id="Q3UUI3"/>
    </source>
</evidence>
<evidence type="ECO:0000250" key="3">
    <source>
        <dbReference type="UniProtKB" id="Q5T1C6"/>
    </source>
</evidence>
<evidence type="ECO:0000255" key="4"/>
<evidence type="ECO:0000305" key="5"/>
<proteinExistence type="evidence at transcript level"/>
<accession>A1A4L1</accession>
<comment type="function">
    <text evidence="3">Has acyl-CoA thioesterase activity towards medium and long-chain (C14 to C18) fatty acyl-CoA substrates, and probably plays a role in mitochondrial fatty acid metabolism (By similarity). Plays a role in the apoptotic process, possibly via its regulation of AKT1 activity (By similarity).</text>
</comment>
<comment type="catalytic activity">
    <reaction evidence="3">
        <text>hexadecanoyl-CoA + H2O = hexadecanoate + CoA + H(+)</text>
        <dbReference type="Rhea" id="RHEA:16645"/>
        <dbReference type="ChEBI" id="CHEBI:7896"/>
        <dbReference type="ChEBI" id="CHEBI:15377"/>
        <dbReference type="ChEBI" id="CHEBI:15378"/>
        <dbReference type="ChEBI" id="CHEBI:57287"/>
        <dbReference type="ChEBI" id="CHEBI:57379"/>
        <dbReference type="EC" id="3.1.2.2"/>
    </reaction>
    <physiologicalReaction direction="left-to-right" evidence="3">
        <dbReference type="Rhea" id="RHEA:16646"/>
    </physiologicalReaction>
</comment>
<comment type="catalytic activity">
    <reaction evidence="3">
        <text>octanoyl-CoA + H2O = octanoate + CoA + H(+)</text>
        <dbReference type="Rhea" id="RHEA:30143"/>
        <dbReference type="ChEBI" id="CHEBI:15377"/>
        <dbReference type="ChEBI" id="CHEBI:15378"/>
        <dbReference type="ChEBI" id="CHEBI:25646"/>
        <dbReference type="ChEBI" id="CHEBI:57287"/>
        <dbReference type="ChEBI" id="CHEBI:57386"/>
    </reaction>
    <physiologicalReaction direction="left-to-right" evidence="3">
        <dbReference type="Rhea" id="RHEA:30144"/>
    </physiologicalReaction>
</comment>
<comment type="catalytic activity">
    <reaction evidence="3">
        <text>decanoyl-CoA + H2O = decanoate + CoA + H(+)</text>
        <dbReference type="Rhea" id="RHEA:40059"/>
        <dbReference type="ChEBI" id="CHEBI:15377"/>
        <dbReference type="ChEBI" id="CHEBI:15378"/>
        <dbReference type="ChEBI" id="CHEBI:27689"/>
        <dbReference type="ChEBI" id="CHEBI:57287"/>
        <dbReference type="ChEBI" id="CHEBI:61430"/>
    </reaction>
    <physiologicalReaction direction="left-to-right" evidence="3">
        <dbReference type="Rhea" id="RHEA:40060"/>
    </physiologicalReaction>
</comment>
<comment type="catalytic activity">
    <reaction evidence="3">
        <text>dodecanoyl-CoA + H2O = dodecanoate + CoA + H(+)</text>
        <dbReference type="Rhea" id="RHEA:30135"/>
        <dbReference type="ChEBI" id="CHEBI:15377"/>
        <dbReference type="ChEBI" id="CHEBI:15378"/>
        <dbReference type="ChEBI" id="CHEBI:18262"/>
        <dbReference type="ChEBI" id="CHEBI:57287"/>
        <dbReference type="ChEBI" id="CHEBI:57375"/>
    </reaction>
    <physiologicalReaction direction="left-to-right" evidence="3">
        <dbReference type="Rhea" id="RHEA:30136"/>
    </physiologicalReaction>
</comment>
<comment type="catalytic activity">
    <reaction evidence="3">
        <text>tetradecanoyl-CoA + H2O = tetradecanoate + CoA + H(+)</text>
        <dbReference type="Rhea" id="RHEA:40119"/>
        <dbReference type="ChEBI" id="CHEBI:15377"/>
        <dbReference type="ChEBI" id="CHEBI:15378"/>
        <dbReference type="ChEBI" id="CHEBI:30807"/>
        <dbReference type="ChEBI" id="CHEBI:57287"/>
        <dbReference type="ChEBI" id="CHEBI:57385"/>
    </reaction>
    <physiologicalReaction direction="left-to-right" evidence="3">
        <dbReference type="Rhea" id="RHEA:40120"/>
    </physiologicalReaction>
</comment>
<comment type="catalytic activity">
    <reaction evidence="3">
        <text>(9Z)-octadecenoyl-CoA + H2O = (9Z)-octadecenoate + CoA + H(+)</text>
        <dbReference type="Rhea" id="RHEA:40139"/>
        <dbReference type="ChEBI" id="CHEBI:15377"/>
        <dbReference type="ChEBI" id="CHEBI:15378"/>
        <dbReference type="ChEBI" id="CHEBI:30823"/>
        <dbReference type="ChEBI" id="CHEBI:57287"/>
        <dbReference type="ChEBI" id="CHEBI:57387"/>
    </reaction>
    <physiologicalReaction direction="left-to-right" evidence="3">
        <dbReference type="Rhea" id="RHEA:40140"/>
    </physiologicalReaction>
</comment>
<comment type="catalytic activity">
    <reaction evidence="3">
        <text>(5Z,8Z,11Z,14Z)-eicosatetraenoyl-CoA + H2O = (5Z,8Z,11Z,14Z)-eicosatetraenoate + CoA + H(+)</text>
        <dbReference type="Rhea" id="RHEA:40151"/>
        <dbReference type="ChEBI" id="CHEBI:15377"/>
        <dbReference type="ChEBI" id="CHEBI:15378"/>
        <dbReference type="ChEBI" id="CHEBI:32395"/>
        <dbReference type="ChEBI" id="CHEBI:57287"/>
        <dbReference type="ChEBI" id="CHEBI:57368"/>
    </reaction>
    <physiologicalReaction direction="left-to-right" evidence="3">
        <dbReference type="Rhea" id="RHEA:40152"/>
    </physiologicalReaction>
</comment>
<comment type="subunit">
    <text evidence="3">Homodimer and homotetramer (By similarity). Interacts with AKT1 in the cytosol (By similarity).</text>
</comment>
<comment type="subcellular location">
    <subcellularLocation>
        <location evidence="3">Cell membrane</location>
    </subcellularLocation>
    <subcellularLocation>
        <location evidence="3">Cell projection</location>
        <location evidence="3">Ruffle membrane</location>
    </subcellularLocation>
    <subcellularLocation>
        <location evidence="3">Cytoplasm</location>
    </subcellularLocation>
    <subcellularLocation>
        <location evidence="3">Mitochondrion</location>
    </subcellularLocation>
    <subcellularLocation>
        <location evidence="3">Mitochondrion inner membrane</location>
        <topology evidence="3">Peripheral membrane protein</topology>
    </subcellularLocation>
    <subcellularLocation>
        <location evidence="3">Mitochondrion intermembrane space</location>
    </subcellularLocation>
    <text evidence="3">Released from the mitochondria into the cytosol in response to apoptotic stimuli.</text>
</comment>
<comment type="PTM">
    <text evidence="3">Phosphorylated.</text>
</comment>
<comment type="similarity">
    <text evidence="5">Belongs to the THEM4/THEM5 thioesterase family.</text>
</comment>
<reference key="1">
    <citation type="submission" date="2006-10" db="EMBL/GenBank/DDBJ databases">
        <authorList>
            <consortium name="NIH - Mammalian Gene Collection (MGC) project"/>
        </authorList>
    </citation>
    <scope>NUCLEOTIDE SEQUENCE [LARGE SCALE MRNA]</scope>
    <source>
        <strain>Hereford</strain>
        <tissue>Hypothalamus</tissue>
    </source>
</reference>
<protein>
    <recommendedName>
        <fullName>Acyl-coenzyme A thioesterase THEM4</fullName>
        <shortName>Acyl-CoA thioesterase THEM4</shortName>
        <ecNumber evidence="3">3.1.2.2</ecNumber>
    </recommendedName>
    <alternativeName>
        <fullName>Thioesterase superfamily member 4</fullName>
    </alternativeName>
</protein>
<sequence>MLRSCTAGLRSIWALRGRREGAPRLSMDLQPARRLFSTEKVIHKDWALPNPSWSKDLKLLFDQFMKKCEDGSWERLPSYKRRSTQESEDFKTYFLDPKLVEEERLSQAQLFTRGFEDGLGFEYVIFKNNDEKRTVCLFQGGPYLQGVPGLLHGGAMATMIDIALGSCTGGAVMTANLNINFKRPVPLCSVVVINSQLDKLEGRKLFLSCNVRSVDEKTLYSEATGLFIKLDPEKSST</sequence>
<organism>
    <name type="scientific">Bos taurus</name>
    <name type="common">Bovine</name>
    <dbReference type="NCBI Taxonomy" id="9913"/>
    <lineage>
        <taxon>Eukaryota</taxon>
        <taxon>Metazoa</taxon>
        <taxon>Chordata</taxon>
        <taxon>Craniata</taxon>
        <taxon>Vertebrata</taxon>
        <taxon>Euteleostomi</taxon>
        <taxon>Mammalia</taxon>
        <taxon>Eutheria</taxon>
        <taxon>Laurasiatheria</taxon>
        <taxon>Artiodactyla</taxon>
        <taxon>Ruminantia</taxon>
        <taxon>Pecora</taxon>
        <taxon>Bovidae</taxon>
        <taxon>Bovinae</taxon>
        <taxon>Bos</taxon>
    </lineage>
</organism>
<gene>
    <name type="primary">THEM4</name>
</gene>
<feature type="transit peptide" description="Mitochondrion" evidence="4">
    <location>
        <begin position="1"/>
        <end position="36"/>
    </location>
</feature>
<feature type="chain" id="PRO_0000314178" description="Acyl-coenzyme A thioesterase THEM4">
    <location>
        <begin position="37"/>
        <end position="237"/>
    </location>
</feature>
<feature type="active site" description="Proton donor/acceptor" evidence="3">
    <location>
        <position position="161"/>
    </location>
</feature>
<feature type="binding site" evidence="1">
    <location>
        <position position="180"/>
    </location>
    <ligand>
        <name>substrate</name>
    </ligand>
</feature>
<feature type="binding site" evidence="1">
    <location>
        <position position="182"/>
    </location>
    <ligand>
        <name>substrate</name>
    </ligand>
</feature>
<feature type="binding site" evidence="1">
    <location>
        <begin position="203"/>
        <end position="204"/>
    </location>
    <ligand>
        <name>substrate</name>
    </ligand>
</feature>
<feature type="modified residue" description="Phosphoserine" evidence="3">
    <location>
        <position position="37"/>
    </location>
</feature>
<feature type="modified residue" description="N6-succinyllysine" evidence="2">
    <location>
        <position position="55"/>
    </location>
</feature>
<feature type="modified residue" description="N6-succinyllysine" evidence="2">
    <location>
        <position position="66"/>
    </location>
</feature>
<feature type="modified residue" description="N6-succinyllysine" evidence="2">
    <location>
        <position position="98"/>
    </location>
</feature>
<feature type="modified residue" description="N6-succinyllysine" evidence="2">
    <location>
        <position position="204"/>
    </location>
</feature>